<organism>
    <name type="scientific">Mycobacterium phage L5</name>
    <name type="common">Mycobacteriophage L5</name>
    <dbReference type="NCBI Taxonomy" id="31757"/>
    <lineage>
        <taxon>Viruses</taxon>
        <taxon>Duplodnaviria</taxon>
        <taxon>Heunggongvirae</taxon>
        <taxon>Uroviricota</taxon>
        <taxon>Caudoviricetes</taxon>
        <taxon>Fromanvirus</taxon>
    </lineage>
</organism>
<organismHost>
    <name type="scientific">Mycobacterium</name>
    <dbReference type="NCBI Taxonomy" id="1763"/>
</organismHost>
<feature type="chain" id="PRO_0000164811" description="Gene 69 protein">
    <location>
        <begin position="1"/>
        <end position="290"/>
    </location>
</feature>
<gene>
    <name type="primary">69</name>
</gene>
<proteinExistence type="predicted"/>
<dbReference type="EMBL" id="Z18946">
    <property type="protein sequence ID" value="CAA79445.1"/>
    <property type="molecule type" value="Genomic_DNA"/>
</dbReference>
<dbReference type="PIR" id="S31014">
    <property type="entry name" value="S31014"/>
</dbReference>
<dbReference type="RefSeq" id="NP_039733.1">
    <property type="nucleotide sequence ID" value="NC_001335.1"/>
</dbReference>
<dbReference type="GeneID" id="2942909"/>
<dbReference type="KEGG" id="vg:2942909"/>
<dbReference type="OrthoDB" id="4950at10239"/>
<dbReference type="Proteomes" id="UP000002123">
    <property type="component" value="Genome"/>
</dbReference>
<dbReference type="Gene3D" id="3.90.320.10">
    <property type="match status" value="1"/>
</dbReference>
<dbReference type="InterPro" id="IPR011604">
    <property type="entry name" value="PDDEXK-like_dom_sf"/>
</dbReference>
<dbReference type="InterPro" id="IPR038726">
    <property type="entry name" value="PDDEXK_AddAB-type"/>
</dbReference>
<dbReference type="InterPro" id="IPR011335">
    <property type="entry name" value="Restrct_endonuc-II-like"/>
</dbReference>
<dbReference type="Pfam" id="PF12705">
    <property type="entry name" value="PDDEXK_1"/>
    <property type="match status" value="1"/>
</dbReference>
<dbReference type="SUPFAM" id="SSF52980">
    <property type="entry name" value="Restriction endonuclease-like"/>
    <property type="match status" value="1"/>
</dbReference>
<sequence>MTDTKTLLPLRSVSQLNQYTRCPQAYKLARIDKVWARPAAWLPQGTAFHTVAEVYEKALAEGREMSLERAQEIFREEYAKDIGALCDETPNFEWWFWSGPYNGERDIERRFHLGLEQVEKFIAWRKDKGQQIWTTPGRGICSTEAWKDTNCKECEQPKPAIELPFNIELDGIRVRGFIDAVVVVNGELRVRDYKTGNSPGDDFQLGVYALAVAMTYDVEAPKTGDYFMAGKKGIKAKPTAPYDLTDWTRERITERFHEVEARIQAGDFEPLPEPDKCGFCDVNYSCPVFK</sequence>
<reference key="1">
    <citation type="journal article" date="1993" name="Mol. Microbiol.">
        <title>DNA sequence, structure and gene expression of mycobacteriophage L5: a phage system for mycobacterial genetics.</title>
        <authorList>
            <person name="Hatfull G.F."/>
            <person name="Sarkis G.J."/>
        </authorList>
    </citation>
    <scope>NUCLEOTIDE SEQUENCE [LARGE SCALE GENOMIC DNA]</scope>
</reference>
<keyword id="KW-1185">Reference proteome</keyword>
<accession>Q05283</accession>
<protein>
    <recommendedName>
        <fullName>Gene 69 protein</fullName>
    </recommendedName>
    <alternativeName>
        <fullName>Gp69</fullName>
    </alternativeName>
</protein>
<name>VG69_BPML5</name>